<accession>A8Z694</accession>
<evidence type="ECO:0000255" key="1">
    <source>
        <dbReference type="HAMAP-Rule" id="MF_01007"/>
    </source>
</evidence>
<reference key="1">
    <citation type="journal article" date="2007" name="Proc. Natl. Acad. Sci. U.S.A.">
        <title>Parallel genomic evolution and metabolic interdependence in an ancient symbiosis.</title>
        <authorList>
            <person name="McCutcheon J.P."/>
            <person name="Moran N.A."/>
        </authorList>
    </citation>
    <scope>NUCLEOTIDE SEQUENCE [LARGE SCALE GENOMIC DNA]</scope>
    <source>
        <strain>GWSS</strain>
    </source>
</reference>
<name>RSMH_KARMG</name>
<dbReference type="EC" id="2.1.1.199" evidence="1"/>
<dbReference type="EMBL" id="CP000770">
    <property type="protein sequence ID" value="ABS30645.1"/>
    <property type="molecule type" value="Genomic_DNA"/>
</dbReference>
<dbReference type="SMR" id="A8Z694"/>
<dbReference type="STRING" id="444179.SMGWSS_248"/>
<dbReference type="KEGG" id="smg:SMGWSS_248"/>
<dbReference type="HOGENOM" id="CLU_038422_2_0_10"/>
<dbReference type="Proteomes" id="UP000000781">
    <property type="component" value="Chromosome"/>
</dbReference>
<dbReference type="GO" id="GO:0005737">
    <property type="term" value="C:cytoplasm"/>
    <property type="evidence" value="ECO:0007669"/>
    <property type="project" value="UniProtKB-SubCell"/>
</dbReference>
<dbReference type="GO" id="GO:0071424">
    <property type="term" value="F:rRNA (cytosine-N4-)-methyltransferase activity"/>
    <property type="evidence" value="ECO:0007669"/>
    <property type="project" value="UniProtKB-UniRule"/>
</dbReference>
<dbReference type="GO" id="GO:0070475">
    <property type="term" value="P:rRNA base methylation"/>
    <property type="evidence" value="ECO:0007669"/>
    <property type="project" value="UniProtKB-UniRule"/>
</dbReference>
<dbReference type="Gene3D" id="1.10.150.170">
    <property type="entry name" value="Putative methyltransferase TM0872, insert domain"/>
    <property type="match status" value="1"/>
</dbReference>
<dbReference type="Gene3D" id="3.40.50.150">
    <property type="entry name" value="Vaccinia Virus protein VP39"/>
    <property type="match status" value="1"/>
</dbReference>
<dbReference type="HAMAP" id="MF_01007">
    <property type="entry name" value="16SrRNA_methyltr_H"/>
    <property type="match status" value="1"/>
</dbReference>
<dbReference type="InterPro" id="IPR002903">
    <property type="entry name" value="RsmH"/>
</dbReference>
<dbReference type="InterPro" id="IPR023397">
    <property type="entry name" value="SAM-dep_MeTrfase_MraW_recog"/>
</dbReference>
<dbReference type="InterPro" id="IPR029063">
    <property type="entry name" value="SAM-dependent_MTases_sf"/>
</dbReference>
<dbReference type="NCBIfam" id="TIGR00006">
    <property type="entry name" value="16S rRNA (cytosine(1402)-N(4))-methyltransferase RsmH"/>
    <property type="match status" value="1"/>
</dbReference>
<dbReference type="PANTHER" id="PTHR11265:SF0">
    <property type="entry name" value="12S RRNA N4-METHYLCYTIDINE METHYLTRANSFERASE"/>
    <property type="match status" value="1"/>
</dbReference>
<dbReference type="PANTHER" id="PTHR11265">
    <property type="entry name" value="S-ADENOSYL-METHYLTRANSFERASE MRAW"/>
    <property type="match status" value="1"/>
</dbReference>
<dbReference type="Pfam" id="PF01795">
    <property type="entry name" value="Methyltransf_5"/>
    <property type="match status" value="1"/>
</dbReference>
<dbReference type="PIRSF" id="PIRSF004486">
    <property type="entry name" value="MraW"/>
    <property type="match status" value="1"/>
</dbReference>
<dbReference type="SUPFAM" id="SSF81799">
    <property type="entry name" value="Putative methyltransferase TM0872, insert domain"/>
    <property type="match status" value="1"/>
</dbReference>
<dbReference type="SUPFAM" id="SSF53335">
    <property type="entry name" value="S-adenosyl-L-methionine-dependent methyltransferases"/>
    <property type="match status" value="1"/>
</dbReference>
<gene>
    <name evidence="1" type="primary">rsmH</name>
    <name type="synonym">mraW</name>
    <name type="ordered locus">SMGWSS_248</name>
</gene>
<keyword id="KW-0963">Cytoplasm</keyword>
<keyword id="KW-0489">Methyltransferase</keyword>
<keyword id="KW-0698">rRNA processing</keyword>
<keyword id="KW-0949">S-adenosyl-L-methionine</keyword>
<keyword id="KW-0808">Transferase</keyword>
<sequence>MDEYHIPVLLDEILSFLVKEKNGIYIDTTFGGGGHSLSLLNKLSNKGRVIAFDKDIDSIKNNNILDARFNLIKTNYRFIKKKIKLFNLNKVSGILADLGISSHQINSPKRGFSIRYNSILDMRMDTYNKINAQHIINNYSYNELYNLLIRFGEVKNAKNISKLILKHRKKKYIKSTFDLIKILNFFYKKKNKFLSKIFQSLRIEVNDEINALKDLLKNSLSILKPGGRIAVISYHSIEDRIVKKFLKTGNFNGIIPYDEYGNNLSPLILLEPRIIFSSKEEKKENNRSRSAILRIAEKKI</sequence>
<organism>
    <name type="scientific">Karelsulcia muelleri (strain GWSS)</name>
    <name type="common">Sulcia muelleri</name>
    <dbReference type="NCBI Taxonomy" id="444179"/>
    <lineage>
        <taxon>Bacteria</taxon>
        <taxon>Pseudomonadati</taxon>
        <taxon>Bacteroidota</taxon>
        <taxon>Flavobacteriia</taxon>
        <taxon>Flavobacteriales</taxon>
        <taxon>Candidatus Karelsulcia</taxon>
    </lineage>
</organism>
<comment type="function">
    <text evidence="1">Specifically methylates the N4 position of cytidine in position 1402 (C1402) of 16S rRNA.</text>
</comment>
<comment type="catalytic activity">
    <reaction evidence="1">
        <text>cytidine(1402) in 16S rRNA + S-adenosyl-L-methionine = N(4)-methylcytidine(1402) in 16S rRNA + S-adenosyl-L-homocysteine + H(+)</text>
        <dbReference type="Rhea" id="RHEA:42928"/>
        <dbReference type="Rhea" id="RHEA-COMP:10286"/>
        <dbReference type="Rhea" id="RHEA-COMP:10287"/>
        <dbReference type="ChEBI" id="CHEBI:15378"/>
        <dbReference type="ChEBI" id="CHEBI:57856"/>
        <dbReference type="ChEBI" id="CHEBI:59789"/>
        <dbReference type="ChEBI" id="CHEBI:74506"/>
        <dbReference type="ChEBI" id="CHEBI:82748"/>
        <dbReference type="EC" id="2.1.1.199"/>
    </reaction>
</comment>
<comment type="subcellular location">
    <subcellularLocation>
        <location evidence="1">Cytoplasm</location>
    </subcellularLocation>
</comment>
<comment type="similarity">
    <text evidence="1">Belongs to the methyltransferase superfamily. RsmH family.</text>
</comment>
<proteinExistence type="inferred from homology"/>
<feature type="chain" id="PRO_1000213166" description="Ribosomal RNA small subunit methyltransferase H">
    <location>
        <begin position="1"/>
        <end position="300"/>
    </location>
</feature>
<feature type="binding site" evidence="1">
    <location>
        <begin position="33"/>
        <end position="35"/>
    </location>
    <ligand>
        <name>S-adenosyl-L-methionine</name>
        <dbReference type="ChEBI" id="CHEBI:59789"/>
    </ligand>
</feature>
<feature type="binding site" evidence="1">
    <location>
        <position position="53"/>
    </location>
    <ligand>
        <name>S-adenosyl-L-methionine</name>
        <dbReference type="ChEBI" id="CHEBI:59789"/>
    </ligand>
</feature>
<feature type="binding site" evidence="1">
    <location>
        <position position="78"/>
    </location>
    <ligand>
        <name>S-adenosyl-L-methionine</name>
        <dbReference type="ChEBI" id="CHEBI:59789"/>
    </ligand>
</feature>
<feature type="binding site" evidence="1">
    <location>
        <position position="97"/>
    </location>
    <ligand>
        <name>S-adenosyl-L-methionine</name>
        <dbReference type="ChEBI" id="CHEBI:59789"/>
    </ligand>
</feature>
<feature type="binding site" evidence="1">
    <location>
        <position position="104"/>
    </location>
    <ligand>
        <name>S-adenosyl-L-methionine</name>
        <dbReference type="ChEBI" id="CHEBI:59789"/>
    </ligand>
</feature>
<protein>
    <recommendedName>
        <fullName evidence="1">Ribosomal RNA small subunit methyltransferase H</fullName>
        <ecNumber evidence="1">2.1.1.199</ecNumber>
    </recommendedName>
    <alternativeName>
        <fullName evidence="1">16S rRNA m(4)C1402 methyltransferase</fullName>
    </alternativeName>
    <alternativeName>
        <fullName evidence="1">rRNA (cytosine-N(4)-)-methyltransferase RsmH</fullName>
    </alternativeName>
</protein>